<gene>
    <name evidence="1" type="primary">dapE</name>
    <name type="ordered locus">BURPS1710b_2596</name>
</gene>
<comment type="function">
    <text evidence="1">Catalyzes the hydrolysis of N-succinyl-L,L-diaminopimelic acid (SDAP), forming succinate and LL-2,6-diaminopimelate (DAP), an intermediate involved in the bacterial biosynthesis of lysine and meso-diaminopimelic acid, an essential component of bacterial cell walls.</text>
</comment>
<comment type="catalytic activity">
    <reaction evidence="1">
        <text>N-succinyl-(2S,6S)-2,6-diaminopimelate + H2O = (2S,6S)-2,6-diaminopimelate + succinate</text>
        <dbReference type="Rhea" id="RHEA:22608"/>
        <dbReference type="ChEBI" id="CHEBI:15377"/>
        <dbReference type="ChEBI" id="CHEBI:30031"/>
        <dbReference type="ChEBI" id="CHEBI:57609"/>
        <dbReference type="ChEBI" id="CHEBI:58087"/>
        <dbReference type="EC" id="3.5.1.18"/>
    </reaction>
</comment>
<comment type="cofactor">
    <cofactor evidence="1">
        <name>Zn(2+)</name>
        <dbReference type="ChEBI" id="CHEBI:29105"/>
    </cofactor>
    <cofactor evidence="1">
        <name>Co(2+)</name>
        <dbReference type="ChEBI" id="CHEBI:48828"/>
    </cofactor>
    <text evidence="1">Binds 2 Zn(2+) or Co(2+) ions per subunit.</text>
</comment>
<comment type="pathway">
    <text evidence="1">Amino-acid biosynthesis; L-lysine biosynthesis via DAP pathway; LL-2,6-diaminopimelate from (S)-tetrahydrodipicolinate (succinylase route): step 3/3.</text>
</comment>
<comment type="subunit">
    <text evidence="1">Homodimer.</text>
</comment>
<comment type="similarity">
    <text evidence="1">Belongs to the peptidase M20A family. DapE subfamily.</text>
</comment>
<comment type="sequence caution" evidence="2">
    <conflict type="erroneous initiation">
        <sequence resource="EMBL-CDS" id="ABA48033"/>
    </conflict>
</comment>
<sequence>MSATLALTEQLIARASVTPDDQHCQQLMIERLAALGFECETIASHGVTNFWAVKRGTAGRAGKLLAFAGHTDVVPTGPLEQWRSPPFVPTHRDGKLYGRGAADMKTSLAGFVVAAEEFVAAHPQHRGSIGFLITSDEEGPATDGTVKVVEALAARGERLDYCIVGEPTSTATLGDVVKNGRRGSMSGELVVKGVQGHIAYPHLAKNPIHLLAPALAELAAEQWDEGNEYFPPTTWQVSNLRAGTGATNVIPGHADLLFNFRFSTASTVEGLQARVHAILDRHGLDYTLNWSVSGLPFLTPRGELSNALDAAIRAETGVSPELSTTGGTSDGRFIARICPQVIEFGPPNASIHKIDEHIDVRFVDPLKNVYRRVLEQLIA</sequence>
<proteinExistence type="inferred from homology"/>
<feature type="chain" id="PRO_0000375510" description="Succinyl-diaminopimelate desuccinylase">
    <location>
        <begin position="1"/>
        <end position="379"/>
    </location>
</feature>
<feature type="active site" evidence="1">
    <location>
        <position position="72"/>
    </location>
</feature>
<feature type="active site" description="Proton acceptor" evidence="1">
    <location>
        <position position="137"/>
    </location>
</feature>
<feature type="binding site" evidence="1">
    <location>
        <position position="70"/>
    </location>
    <ligand>
        <name>Zn(2+)</name>
        <dbReference type="ChEBI" id="CHEBI:29105"/>
        <label>1</label>
    </ligand>
</feature>
<feature type="binding site" evidence="1">
    <location>
        <position position="103"/>
    </location>
    <ligand>
        <name>Zn(2+)</name>
        <dbReference type="ChEBI" id="CHEBI:29105"/>
        <label>1</label>
    </ligand>
</feature>
<feature type="binding site" evidence="1">
    <location>
        <position position="103"/>
    </location>
    <ligand>
        <name>Zn(2+)</name>
        <dbReference type="ChEBI" id="CHEBI:29105"/>
        <label>2</label>
    </ligand>
</feature>
<feature type="binding site" evidence="1">
    <location>
        <position position="138"/>
    </location>
    <ligand>
        <name>Zn(2+)</name>
        <dbReference type="ChEBI" id="CHEBI:29105"/>
        <label>2</label>
    </ligand>
</feature>
<feature type="binding site" evidence="1">
    <location>
        <position position="166"/>
    </location>
    <ligand>
        <name>Zn(2+)</name>
        <dbReference type="ChEBI" id="CHEBI:29105"/>
        <label>1</label>
    </ligand>
</feature>
<feature type="binding site" evidence="1">
    <location>
        <position position="352"/>
    </location>
    <ligand>
        <name>Zn(2+)</name>
        <dbReference type="ChEBI" id="CHEBI:29105"/>
        <label>2</label>
    </ligand>
</feature>
<keyword id="KW-0028">Amino-acid biosynthesis</keyword>
<keyword id="KW-0170">Cobalt</keyword>
<keyword id="KW-0220">Diaminopimelate biosynthesis</keyword>
<keyword id="KW-0378">Hydrolase</keyword>
<keyword id="KW-0457">Lysine biosynthesis</keyword>
<keyword id="KW-0479">Metal-binding</keyword>
<keyword id="KW-0862">Zinc</keyword>
<evidence type="ECO:0000255" key="1">
    <source>
        <dbReference type="HAMAP-Rule" id="MF_01690"/>
    </source>
</evidence>
<evidence type="ECO:0000305" key="2"/>
<organism>
    <name type="scientific">Burkholderia pseudomallei (strain 1710b)</name>
    <dbReference type="NCBI Taxonomy" id="320372"/>
    <lineage>
        <taxon>Bacteria</taxon>
        <taxon>Pseudomonadati</taxon>
        <taxon>Pseudomonadota</taxon>
        <taxon>Betaproteobacteria</taxon>
        <taxon>Burkholderiales</taxon>
        <taxon>Burkholderiaceae</taxon>
        <taxon>Burkholderia</taxon>
        <taxon>pseudomallei group</taxon>
    </lineage>
</organism>
<accession>Q3JR15</accession>
<name>DAPE_BURP1</name>
<dbReference type="EC" id="3.5.1.18" evidence="1"/>
<dbReference type="EMBL" id="CP000124">
    <property type="protein sequence ID" value="ABA48033.1"/>
    <property type="status" value="ALT_INIT"/>
    <property type="molecule type" value="Genomic_DNA"/>
</dbReference>
<dbReference type="RefSeq" id="WP_004191377.1">
    <property type="nucleotide sequence ID" value="NC_007434.1"/>
</dbReference>
<dbReference type="SMR" id="Q3JR15"/>
<dbReference type="EnsemblBacteria" id="ABA48033">
    <property type="protein sequence ID" value="ABA48033"/>
    <property type="gene ID" value="BURPS1710b_2596"/>
</dbReference>
<dbReference type="GeneID" id="92979293"/>
<dbReference type="KEGG" id="bpm:BURPS1710b_2596"/>
<dbReference type="HOGENOM" id="CLU_021802_4_0_4"/>
<dbReference type="UniPathway" id="UPA00034">
    <property type="reaction ID" value="UER00021"/>
</dbReference>
<dbReference type="Proteomes" id="UP000002700">
    <property type="component" value="Chromosome I"/>
</dbReference>
<dbReference type="GO" id="GO:0008777">
    <property type="term" value="F:acetylornithine deacetylase activity"/>
    <property type="evidence" value="ECO:0007669"/>
    <property type="project" value="TreeGrafter"/>
</dbReference>
<dbReference type="GO" id="GO:0050897">
    <property type="term" value="F:cobalt ion binding"/>
    <property type="evidence" value="ECO:0007669"/>
    <property type="project" value="UniProtKB-UniRule"/>
</dbReference>
<dbReference type="GO" id="GO:0009014">
    <property type="term" value="F:succinyl-diaminopimelate desuccinylase activity"/>
    <property type="evidence" value="ECO:0007669"/>
    <property type="project" value="UniProtKB-UniRule"/>
</dbReference>
<dbReference type="GO" id="GO:0008270">
    <property type="term" value="F:zinc ion binding"/>
    <property type="evidence" value="ECO:0007669"/>
    <property type="project" value="UniProtKB-UniRule"/>
</dbReference>
<dbReference type="GO" id="GO:0019877">
    <property type="term" value="P:diaminopimelate biosynthetic process"/>
    <property type="evidence" value="ECO:0007669"/>
    <property type="project" value="UniProtKB-UniRule"/>
</dbReference>
<dbReference type="GO" id="GO:0006526">
    <property type="term" value="P:L-arginine biosynthetic process"/>
    <property type="evidence" value="ECO:0007669"/>
    <property type="project" value="TreeGrafter"/>
</dbReference>
<dbReference type="GO" id="GO:0009089">
    <property type="term" value="P:lysine biosynthetic process via diaminopimelate"/>
    <property type="evidence" value="ECO:0007669"/>
    <property type="project" value="UniProtKB-UniRule"/>
</dbReference>
<dbReference type="CDD" id="cd03891">
    <property type="entry name" value="M20_DapE_proteobac"/>
    <property type="match status" value="1"/>
</dbReference>
<dbReference type="FunFam" id="3.30.70.360:FF:000011">
    <property type="entry name" value="Succinyl-diaminopimelate desuccinylase"/>
    <property type="match status" value="1"/>
</dbReference>
<dbReference type="FunFam" id="3.40.630.10:FF:000005">
    <property type="entry name" value="Succinyl-diaminopimelate desuccinylase"/>
    <property type="match status" value="1"/>
</dbReference>
<dbReference type="Gene3D" id="3.40.630.10">
    <property type="entry name" value="Zn peptidases"/>
    <property type="match status" value="2"/>
</dbReference>
<dbReference type="HAMAP" id="MF_01690">
    <property type="entry name" value="DapE"/>
    <property type="match status" value="1"/>
</dbReference>
<dbReference type="InterPro" id="IPR001261">
    <property type="entry name" value="ArgE/DapE_CS"/>
</dbReference>
<dbReference type="InterPro" id="IPR036264">
    <property type="entry name" value="Bact_exopeptidase_dim_dom"/>
</dbReference>
<dbReference type="InterPro" id="IPR005941">
    <property type="entry name" value="DapE_proteobac"/>
</dbReference>
<dbReference type="InterPro" id="IPR002933">
    <property type="entry name" value="Peptidase_M20"/>
</dbReference>
<dbReference type="InterPro" id="IPR011650">
    <property type="entry name" value="Peptidase_M20_dimer"/>
</dbReference>
<dbReference type="InterPro" id="IPR050072">
    <property type="entry name" value="Peptidase_M20A"/>
</dbReference>
<dbReference type="NCBIfam" id="TIGR01246">
    <property type="entry name" value="dapE_proteo"/>
    <property type="match status" value="1"/>
</dbReference>
<dbReference type="NCBIfam" id="NF009557">
    <property type="entry name" value="PRK13009.1"/>
    <property type="match status" value="1"/>
</dbReference>
<dbReference type="PANTHER" id="PTHR43808">
    <property type="entry name" value="ACETYLORNITHINE DEACETYLASE"/>
    <property type="match status" value="1"/>
</dbReference>
<dbReference type="PANTHER" id="PTHR43808:SF31">
    <property type="entry name" value="N-ACETYL-L-CITRULLINE DEACETYLASE"/>
    <property type="match status" value="1"/>
</dbReference>
<dbReference type="Pfam" id="PF07687">
    <property type="entry name" value="M20_dimer"/>
    <property type="match status" value="1"/>
</dbReference>
<dbReference type="Pfam" id="PF01546">
    <property type="entry name" value="Peptidase_M20"/>
    <property type="match status" value="1"/>
</dbReference>
<dbReference type="SUPFAM" id="SSF55031">
    <property type="entry name" value="Bacterial exopeptidase dimerisation domain"/>
    <property type="match status" value="1"/>
</dbReference>
<dbReference type="SUPFAM" id="SSF53187">
    <property type="entry name" value="Zn-dependent exopeptidases"/>
    <property type="match status" value="1"/>
</dbReference>
<dbReference type="PROSITE" id="PS00758">
    <property type="entry name" value="ARGE_DAPE_CPG2_1"/>
    <property type="match status" value="1"/>
</dbReference>
<protein>
    <recommendedName>
        <fullName evidence="1">Succinyl-diaminopimelate desuccinylase</fullName>
        <shortName evidence="1">SDAP desuccinylase</shortName>
        <ecNumber evidence="1">3.5.1.18</ecNumber>
    </recommendedName>
    <alternativeName>
        <fullName evidence="1">N-succinyl-LL-2,6-diaminoheptanedioate amidohydrolase</fullName>
    </alternativeName>
</protein>
<reference key="1">
    <citation type="journal article" date="2010" name="Genome Biol. Evol.">
        <title>Continuing evolution of Burkholderia mallei through genome reduction and large-scale rearrangements.</title>
        <authorList>
            <person name="Losada L."/>
            <person name="Ronning C.M."/>
            <person name="DeShazer D."/>
            <person name="Woods D."/>
            <person name="Fedorova N."/>
            <person name="Kim H.S."/>
            <person name="Shabalina S.A."/>
            <person name="Pearson T.R."/>
            <person name="Brinkac L."/>
            <person name="Tan P."/>
            <person name="Nandi T."/>
            <person name="Crabtree J."/>
            <person name="Badger J."/>
            <person name="Beckstrom-Sternberg S."/>
            <person name="Saqib M."/>
            <person name="Schutzer S.E."/>
            <person name="Keim P."/>
            <person name="Nierman W.C."/>
        </authorList>
    </citation>
    <scope>NUCLEOTIDE SEQUENCE [LARGE SCALE GENOMIC DNA]</scope>
    <source>
        <strain>1710b</strain>
    </source>
</reference>